<evidence type="ECO:0000250" key="1"/>
<evidence type="ECO:0000250" key="2">
    <source>
        <dbReference type="UniProtKB" id="P08559"/>
    </source>
</evidence>
<evidence type="ECO:0000255" key="3"/>
<evidence type="ECO:0000256" key="4">
    <source>
        <dbReference type="SAM" id="MobiDB-lite"/>
    </source>
</evidence>
<sequence>MAAAILLRRVPPARAQATALIAARSISDSTAPLTIETSVPFTSHIVDPPSRDVTTTPAELLTFFRDMSVMRRMEIAADSLYKAKLIRGFCHLYDGQEAVAVGMEAAITRSDSIITAYRDHCTYLARGGDLVSAFAELMGRQAGCSRGKGGSMHFYKKDANFYGGHGIVGAQVPLGCGLAFAQKYRKEETATFALYGDGAANQGQLFEALNISALWKLPAILVCENNHYGMGTAEWRAAKSPAYYKRGDYVPGLKVDGMDVLAVKQACKFAKEHAIANGPIVLEMDTYRYHGHSMSDPGSTYRTRDEISGVRQERDPIERVRKLILAHDLATAAELKDMEKEIRKEVDDAIAKAKESPMPDTSELFTNVYVKGFGVESFGADRKELRATLP</sequence>
<organism>
    <name type="scientific">Oryza sativa subsp. japonica</name>
    <name type="common">Rice</name>
    <dbReference type="NCBI Taxonomy" id="39947"/>
    <lineage>
        <taxon>Eukaryota</taxon>
        <taxon>Viridiplantae</taxon>
        <taxon>Streptophyta</taxon>
        <taxon>Embryophyta</taxon>
        <taxon>Tracheophyta</taxon>
        <taxon>Spermatophyta</taxon>
        <taxon>Magnoliopsida</taxon>
        <taxon>Liliopsida</taxon>
        <taxon>Poales</taxon>
        <taxon>Poaceae</taxon>
        <taxon>BOP clade</taxon>
        <taxon>Oryzoideae</taxon>
        <taxon>Oryzeae</taxon>
        <taxon>Oryzinae</taxon>
        <taxon>Oryza</taxon>
        <taxon>Oryza sativa</taxon>
    </lineage>
</organism>
<keyword id="KW-0460">Magnesium</keyword>
<keyword id="KW-0479">Metal-binding</keyword>
<keyword id="KW-0496">Mitochondrion</keyword>
<keyword id="KW-0560">Oxidoreductase</keyword>
<keyword id="KW-0597">Phosphoprotein</keyword>
<keyword id="KW-0670">Pyruvate</keyword>
<keyword id="KW-1185">Reference proteome</keyword>
<keyword id="KW-0786">Thiamine pyrophosphate</keyword>
<keyword id="KW-0809">Transit peptide</keyword>
<proteinExistence type="evidence at transcript level"/>
<dbReference type="EC" id="1.2.4.1"/>
<dbReference type="EMBL" id="AP005112">
    <property type="protein sequence ID" value="BAD16048.1"/>
    <property type="molecule type" value="Genomic_DNA"/>
</dbReference>
<dbReference type="EMBL" id="AP008208">
    <property type="protein sequence ID" value="BAF09982.1"/>
    <property type="molecule type" value="Genomic_DNA"/>
</dbReference>
<dbReference type="EMBL" id="AP014958">
    <property type="protein sequence ID" value="BAS80837.1"/>
    <property type="molecule type" value="Genomic_DNA"/>
</dbReference>
<dbReference type="EMBL" id="CM000139">
    <property type="protein sequence ID" value="EAZ24558.1"/>
    <property type="molecule type" value="Genomic_DNA"/>
</dbReference>
<dbReference type="EMBL" id="AK098950">
    <property type="protein sequence ID" value="BAG93828.1"/>
    <property type="molecule type" value="mRNA"/>
</dbReference>
<dbReference type="RefSeq" id="XP_015626335.1">
    <property type="nucleotide sequence ID" value="XM_015770849.1"/>
</dbReference>
<dbReference type="SMR" id="Q6Z5N4"/>
<dbReference type="FunCoup" id="Q6Z5N4">
    <property type="interactions" value="2687"/>
</dbReference>
<dbReference type="STRING" id="39947.Q6Z5N4"/>
<dbReference type="iPTMnet" id="Q6Z5N4"/>
<dbReference type="PaxDb" id="39947-Q6Z5N4"/>
<dbReference type="EnsemblPlants" id="Os02t0739600-01">
    <property type="protein sequence ID" value="Os02t0739600-01"/>
    <property type="gene ID" value="Os02g0739600"/>
</dbReference>
<dbReference type="Gramene" id="Os02t0739600-01">
    <property type="protein sequence ID" value="Os02t0739600-01"/>
    <property type="gene ID" value="Os02g0739600"/>
</dbReference>
<dbReference type="KEGG" id="dosa:Os02g0739600"/>
<dbReference type="eggNOG" id="KOG0225">
    <property type="taxonomic scope" value="Eukaryota"/>
</dbReference>
<dbReference type="HOGENOM" id="CLU_029393_5_2_1"/>
<dbReference type="InParanoid" id="Q6Z5N4"/>
<dbReference type="OMA" id="LGYEMPC"/>
<dbReference type="OrthoDB" id="10256198at2759"/>
<dbReference type="Proteomes" id="UP000000763">
    <property type="component" value="Chromosome 2"/>
</dbReference>
<dbReference type="Proteomes" id="UP000007752">
    <property type="component" value="Chromosome 2"/>
</dbReference>
<dbReference type="Proteomes" id="UP000059680">
    <property type="component" value="Chromosome 2"/>
</dbReference>
<dbReference type="GO" id="GO:0005759">
    <property type="term" value="C:mitochondrial matrix"/>
    <property type="evidence" value="ECO:0007669"/>
    <property type="project" value="UniProtKB-SubCell"/>
</dbReference>
<dbReference type="GO" id="GO:0046872">
    <property type="term" value="F:metal ion binding"/>
    <property type="evidence" value="ECO:0007669"/>
    <property type="project" value="UniProtKB-KW"/>
</dbReference>
<dbReference type="GO" id="GO:0004739">
    <property type="term" value="F:pyruvate dehydrogenase (acetyl-transferring) activity"/>
    <property type="evidence" value="ECO:0000318"/>
    <property type="project" value="GO_Central"/>
</dbReference>
<dbReference type="GO" id="GO:0006086">
    <property type="term" value="P:pyruvate decarboxylation to acetyl-CoA"/>
    <property type="evidence" value="ECO:0000318"/>
    <property type="project" value="GO_Central"/>
</dbReference>
<dbReference type="CDD" id="cd02000">
    <property type="entry name" value="TPP_E1_PDC_ADC_BCADC"/>
    <property type="match status" value="1"/>
</dbReference>
<dbReference type="FunFam" id="3.40.50.970:FF:000013">
    <property type="entry name" value="Pyruvate dehydrogenase E1 component subunit alpha"/>
    <property type="match status" value="1"/>
</dbReference>
<dbReference type="Gene3D" id="3.40.50.970">
    <property type="match status" value="1"/>
</dbReference>
<dbReference type="InterPro" id="IPR001017">
    <property type="entry name" value="DH_E1"/>
</dbReference>
<dbReference type="InterPro" id="IPR050642">
    <property type="entry name" value="PDH_E1_Alpha_Subunit"/>
</dbReference>
<dbReference type="InterPro" id="IPR017597">
    <property type="entry name" value="Pyrv_DH_E1_asu_subgrp-y"/>
</dbReference>
<dbReference type="InterPro" id="IPR029061">
    <property type="entry name" value="THDP-binding"/>
</dbReference>
<dbReference type="NCBIfam" id="TIGR03182">
    <property type="entry name" value="PDH_E1_alph_y"/>
    <property type="match status" value="1"/>
</dbReference>
<dbReference type="PANTHER" id="PTHR11516:SF60">
    <property type="entry name" value="PYRUVATE DEHYDROGENASE E1 COMPONENT SUBUNIT ALPHA"/>
    <property type="match status" value="1"/>
</dbReference>
<dbReference type="PANTHER" id="PTHR11516">
    <property type="entry name" value="PYRUVATE DEHYDROGENASE E1 COMPONENT, ALPHA SUBUNIT BACTERIAL AND ORGANELLAR"/>
    <property type="match status" value="1"/>
</dbReference>
<dbReference type="Pfam" id="PF00676">
    <property type="entry name" value="E1_dh"/>
    <property type="match status" value="1"/>
</dbReference>
<dbReference type="SUPFAM" id="SSF52518">
    <property type="entry name" value="Thiamin diphosphate-binding fold (THDP-binding)"/>
    <property type="match status" value="1"/>
</dbReference>
<feature type="transit peptide" description="Mitochondrion" evidence="3">
    <location>
        <begin position="1"/>
        <end position="15"/>
    </location>
</feature>
<feature type="chain" id="PRO_0000421368" description="Pyruvate dehydrogenase E1 component subunit alpha-1, mitochondrial">
    <location>
        <begin position="16"/>
        <end position="390"/>
    </location>
</feature>
<feature type="region of interest" description="Disordered" evidence="4">
    <location>
        <begin position="293"/>
        <end position="312"/>
    </location>
</feature>
<feature type="compositionally biased region" description="Basic and acidic residues" evidence="4">
    <location>
        <begin position="302"/>
        <end position="312"/>
    </location>
</feature>
<feature type="binding site" evidence="2">
    <location>
        <position position="91"/>
    </location>
    <ligand>
        <name>pyruvate</name>
        <dbReference type="ChEBI" id="CHEBI:15361"/>
    </ligand>
</feature>
<feature type="binding site" evidence="2">
    <location>
        <position position="117"/>
    </location>
    <ligand>
        <name>pyruvate</name>
        <dbReference type="ChEBI" id="CHEBI:15361"/>
    </ligand>
</feature>
<feature type="binding site" evidence="2">
    <location>
        <position position="117"/>
    </location>
    <ligand>
        <name>thiamine diphosphate</name>
        <dbReference type="ChEBI" id="CHEBI:58937"/>
        <note>ligand shared with beta subunit</note>
    </ligand>
</feature>
<feature type="binding site" evidence="2">
    <location>
        <position position="118"/>
    </location>
    <ligand>
        <name>pyruvate</name>
        <dbReference type="ChEBI" id="CHEBI:15361"/>
    </ligand>
</feature>
<feature type="binding site" evidence="2">
    <location>
        <position position="118"/>
    </location>
    <ligand>
        <name>thiamine diphosphate</name>
        <dbReference type="ChEBI" id="CHEBI:58937"/>
        <note>ligand shared with beta subunit</note>
    </ligand>
</feature>
<feature type="binding site" evidence="2">
    <location>
        <position position="166"/>
    </location>
    <ligand>
        <name>pyruvate</name>
        <dbReference type="ChEBI" id="CHEBI:15361"/>
    </ligand>
</feature>
<feature type="binding site" evidence="2">
    <location>
        <position position="166"/>
    </location>
    <ligand>
        <name>thiamine diphosphate</name>
        <dbReference type="ChEBI" id="CHEBI:58937"/>
        <note>ligand shared with beta subunit</note>
    </ligand>
</feature>
<feature type="binding site" evidence="2">
    <location>
        <position position="168"/>
    </location>
    <ligand>
        <name>pyruvate</name>
        <dbReference type="ChEBI" id="CHEBI:15361"/>
    </ligand>
</feature>
<feature type="binding site" evidence="2">
    <location>
        <position position="168"/>
    </location>
    <ligand>
        <name>thiamine diphosphate</name>
        <dbReference type="ChEBI" id="CHEBI:58937"/>
        <note>ligand shared with beta subunit</note>
    </ligand>
</feature>
<feature type="binding site" evidence="2">
    <location>
        <position position="197"/>
    </location>
    <ligand>
        <name>Mg(2+)</name>
        <dbReference type="ChEBI" id="CHEBI:18420"/>
    </ligand>
</feature>
<feature type="binding site" evidence="2">
    <location>
        <position position="197"/>
    </location>
    <ligand>
        <name>pyruvate</name>
        <dbReference type="ChEBI" id="CHEBI:15361"/>
    </ligand>
</feature>
<feature type="binding site" evidence="2">
    <location>
        <position position="197"/>
    </location>
    <ligand>
        <name>thiamine diphosphate</name>
        <dbReference type="ChEBI" id="CHEBI:58937"/>
        <note>ligand shared with beta subunit</note>
    </ligand>
</feature>
<feature type="binding site" evidence="2">
    <location>
        <position position="198"/>
    </location>
    <ligand>
        <name>pyruvate</name>
        <dbReference type="ChEBI" id="CHEBI:15361"/>
    </ligand>
</feature>
<feature type="binding site" evidence="2">
    <location>
        <position position="198"/>
    </location>
    <ligand>
        <name>thiamine diphosphate</name>
        <dbReference type="ChEBI" id="CHEBI:58937"/>
        <note>ligand shared with beta subunit</note>
    </ligand>
</feature>
<feature type="binding site" evidence="2">
    <location>
        <position position="199"/>
    </location>
    <ligand>
        <name>pyruvate</name>
        <dbReference type="ChEBI" id="CHEBI:15361"/>
    </ligand>
</feature>
<feature type="binding site" evidence="2">
    <location>
        <position position="199"/>
    </location>
    <ligand>
        <name>thiamine diphosphate</name>
        <dbReference type="ChEBI" id="CHEBI:58937"/>
        <note>ligand shared with beta subunit</note>
    </ligand>
</feature>
<feature type="binding site" evidence="2">
    <location>
        <position position="226"/>
    </location>
    <ligand>
        <name>Mg(2+)</name>
        <dbReference type="ChEBI" id="CHEBI:18420"/>
    </ligand>
</feature>
<feature type="binding site" evidence="2">
    <location>
        <position position="226"/>
    </location>
    <ligand>
        <name>pyruvate</name>
        <dbReference type="ChEBI" id="CHEBI:15361"/>
    </ligand>
</feature>
<feature type="binding site" evidence="2">
    <location>
        <position position="226"/>
    </location>
    <ligand>
        <name>thiamine diphosphate</name>
        <dbReference type="ChEBI" id="CHEBI:58937"/>
        <note>ligand shared with beta subunit</note>
    </ligand>
</feature>
<feature type="binding site" evidence="2">
    <location>
        <position position="228"/>
    </location>
    <ligand>
        <name>Mg(2+)</name>
        <dbReference type="ChEBI" id="CHEBI:18420"/>
    </ligand>
</feature>
<feature type="binding site" evidence="2">
    <location>
        <position position="228"/>
    </location>
    <ligand>
        <name>pyruvate</name>
        <dbReference type="ChEBI" id="CHEBI:15361"/>
    </ligand>
</feature>
<feature type="binding site" evidence="2">
    <location>
        <position position="292"/>
    </location>
    <ligand>
        <name>thiamine diphosphate</name>
        <dbReference type="ChEBI" id="CHEBI:58937"/>
        <note>ligand shared with beta subunit</note>
    </ligand>
</feature>
<name>ODPA1_ORYSJ</name>
<gene>
    <name type="ordered locus">Os02g0739600</name>
    <name type="ordered locus">LOC_Os02g50620</name>
    <name type="ORF">OsJ_08320</name>
    <name type="ORF">P0684F11.25</name>
</gene>
<protein>
    <recommendedName>
        <fullName>Pyruvate dehydrogenase E1 component subunit alpha-1, mitochondrial</fullName>
        <shortName>PDHE1-A</shortName>
        <ecNumber>1.2.4.1</ecNumber>
    </recommendedName>
</protein>
<accession>Q6Z5N4</accession>
<accession>A0A0P0VP76</accession>
<comment type="function">
    <text evidence="1">The pyruvate dehydrogenase complex catalyzes the overall conversion of pyruvate to acetyl-CoA and CO(2). It contains multiple copies of three enzymatic components: pyruvate dehydrogenase (E1), dihydrolipoamide acetyltransferase (E2) and lipoamide dehydrogenase (E3) (By similarity).</text>
</comment>
<comment type="catalytic activity">
    <reaction>
        <text>N(6)-[(R)-lipoyl]-L-lysyl-[protein] + pyruvate + H(+) = N(6)-[(R)-S(8)-acetyldihydrolipoyl]-L-lysyl-[protein] + CO2</text>
        <dbReference type="Rhea" id="RHEA:19189"/>
        <dbReference type="Rhea" id="RHEA-COMP:10474"/>
        <dbReference type="Rhea" id="RHEA-COMP:10478"/>
        <dbReference type="ChEBI" id="CHEBI:15361"/>
        <dbReference type="ChEBI" id="CHEBI:15378"/>
        <dbReference type="ChEBI" id="CHEBI:16526"/>
        <dbReference type="ChEBI" id="CHEBI:83099"/>
        <dbReference type="ChEBI" id="CHEBI:83111"/>
        <dbReference type="EC" id="1.2.4.1"/>
    </reaction>
</comment>
<comment type="cofactor">
    <cofactor evidence="2">
        <name>thiamine diphosphate</name>
        <dbReference type="ChEBI" id="CHEBI:58937"/>
    </cofactor>
    <cofactor evidence="2">
        <name>Mg(2+)</name>
        <dbReference type="ChEBI" id="CHEBI:18420"/>
    </cofactor>
</comment>
<comment type="subunit">
    <text evidence="1">Tetramer of 2 alpha and 2 beta subunits.</text>
</comment>
<comment type="subcellular location">
    <subcellularLocation>
        <location evidence="1">Mitochondrion matrix</location>
    </subcellularLocation>
</comment>
<reference key="1">
    <citation type="journal article" date="2005" name="Nature">
        <title>The map-based sequence of the rice genome.</title>
        <authorList>
            <consortium name="International rice genome sequencing project (IRGSP)"/>
        </authorList>
    </citation>
    <scope>NUCLEOTIDE SEQUENCE [LARGE SCALE GENOMIC DNA]</scope>
    <source>
        <strain>cv. Nipponbare</strain>
    </source>
</reference>
<reference key="2">
    <citation type="journal article" date="2008" name="Nucleic Acids Res.">
        <title>The rice annotation project database (RAP-DB): 2008 update.</title>
        <authorList>
            <consortium name="The rice annotation project (RAP)"/>
        </authorList>
    </citation>
    <scope>GENOME REANNOTATION</scope>
    <source>
        <strain>cv. Nipponbare</strain>
    </source>
</reference>
<reference key="3">
    <citation type="journal article" date="2013" name="Rice">
        <title>Improvement of the Oryza sativa Nipponbare reference genome using next generation sequence and optical map data.</title>
        <authorList>
            <person name="Kawahara Y."/>
            <person name="de la Bastide M."/>
            <person name="Hamilton J.P."/>
            <person name="Kanamori H."/>
            <person name="McCombie W.R."/>
            <person name="Ouyang S."/>
            <person name="Schwartz D.C."/>
            <person name="Tanaka T."/>
            <person name="Wu J."/>
            <person name="Zhou S."/>
            <person name="Childs K.L."/>
            <person name="Davidson R.M."/>
            <person name="Lin H."/>
            <person name="Quesada-Ocampo L."/>
            <person name="Vaillancourt B."/>
            <person name="Sakai H."/>
            <person name="Lee S.S."/>
            <person name="Kim J."/>
            <person name="Numa H."/>
            <person name="Itoh T."/>
            <person name="Buell C.R."/>
            <person name="Matsumoto T."/>
        </authorList>
    </citation>
    <scope>GENOME REANNOTATION</scope>
    <source>
        <strain>cv. Nipponbare</strain>
    </source>
</reference>
<reference key="4">
    <citation type="journal article" date="2005" name="PLoS Biol.">
        <title>The genomes of Oryza sativa: a history of duplications.</title>
        <authorList>
            <person name="Yu J."/>
            <person name="Wang J."/>
            <person name="Lin W."/>
            <person name="Li S."/>
            <person name="Li H."/>
            <person name="Zhou J."/>
            <person name="Ni P."/>
            <person name="Dong W."/>
            <person name="Hu S."/>
            <person name="Zeng C."/>
            <person name="Zhang J."/>
            <person name="Zhang Y."/>
            <person name="Li R."/>
            <person name="Xu Z."/>
            <person name="Li S."/>
            <person name="Li X."/>
            <person name="Zheng H."/>
            <person name="Cong L."/>
            <person name="Lin L."/>
            <person name="Yin J."/>
            <person name="Geng J."/>
            <person name="Li G."/>
            <person name="Shi J."/>
            <person name="Liu J."/>
            <person name="Lv H."/>
            <person name="Li J."/>
            <person name="Wang J."/>
            <person name="Deng Y."/>
            <person name="Ran L."/>
            <person name="Shi X."/>
            <person name="Wang X."/>
            <person name="Wu Q."/>
            <person name="Li C."/>
            <person name="Ren X."/>
            <person name="Wang J."/>
            <person name="Wang X."/>
            <person name="Li D."/>
            <person name="Liu D."/>
            <person name="Zhang X."/>
            <person name="Ji Z."/>
            <person name="Zhao W."/>
            <person name="Sun Y."/>
            <person name="Zhang Z."/>
            <person name="Bao J."/>
            <person name="Han Y."/>
            <person name="Dong L."/>
            <person name="Ji J."/>
            <person name="Chen P."/>
            <person name="Wu S."/>
            <person name="Liu J."/>
            <person name="Xiao Y."/>
            <person name="Bu D."/>
            <person name="Tan J."/>
            <person name="Yang L."/>
            <person name="Ye C."/>
            <person name="Zhang J."/>
            <person name="Xu J."/>
            <person name="Zhou Y."/>
            <person name="Yu Y."/>
            <person name="Zhang B."/>
            <person name="Zhuang S."/>
            <person name="Wei H."/>
            <person name="Liu B."/>
            <person name="Lei M."/>
            <person name="Yu H."/>
            <person name="Li Y."/>
            <person name="Xu H."/>
            <person name="Wei S."/>
            <person name="He X."/>
            <person name="Fang L."/>
            <person name="Zhang Z."/>
            <person name="Zhang Y."/>
            <person name="Huang X."/>
            <person name="Su Z."/>
            <person name="Tong W."/>
            <person name="Li J."/>
            <person name="Tong Z."/>
            <person name="Li S."/>
            <person name="Ye J."/>
            <person name="Wang L."/>
            <person name="Fang L."/>
            <person name="Lei T."/>
            <person name="Chen C.-S."/>
            <person name="Chen H.-C."/>
            <person name="Xu Z."/>
            <person name="Li H."/>
            <person name="Huang H."/>
            <person name="Zhang F."/>
            <person name="Xu H."/>
            <person name="Li N."/>
            <person name="Zhao C."/>
            <person name="Li S."/>
            <person name="Dong L."/>
            <person name="Huang Y."/>
            <person name="Li L."/>
            <person name="Xi Y."/>
            <person name="Qi Q."/>
            <person name="Li W."/>
            <person name="Zhang B."/>
            <person name="Hu W."/>
            <person name="Zhang Y."/>
            <person name="Tian X."/>
            <person name="Jiao Y."/>
            <person name="Liang X."/>
            <person name="Jin J."/>
            <person name="Gao L."/>
            <person name="Zheng W."/>
            <person name="Hao B."/>
            <person name="Liu S.-M."/>
            <person name="Wang W."/>
            <person name="Yuan L."/>
            <person name="Cao M."/>
            <person name="McDermott J."/>
            <person name="Samudrala R."/>
            <person name="Wang J."/>
            <person name="Wong G.K.-S."/>
            <person name="Yang H."/>
        </authorList>
    </citation>
    <scope>NUCLEOTIDE SEQUENCE [LARGE SCALE GENOMIC DNA]</scope>
    <source>
        <strain>cv. Nipponbare</strain>
    </source>
</reference>
<reference key="5">
    <citation type="journal article" date="2003" name="Science">
        <title>Collection, mapping, and annotation of over 28,000 cDNA clones from japonica rice.</title>
        <authorList>
            <consortium name="The rice full-length cDNA consortium"/>
        </authorList>
    </citation>
    <scope>NUCLEOTIDE SEQUENCE [LARGE SCALE MRNA]</scope>
    <source>
        <strain>cv. Nipponbare</strain>
    </source>
</reference>